<accession>P23130</accession>
<protein>
    <recommendedName>
        <fullName>23S rRNA methylase leader peptide</fullName>
    </recommendedName>
    <alternativeName>
        <fullName>Erythromycin resistance leader peptide</fullName>
    </alternativeName>
</protein>
<reference key="1">
    <citation type="journal article" date="1985" name="J. Bacteriol.">
        <title>Complete nucleotide sequence of macrolide-lincosamide-streptogramin B-resistance transposon Tn917 in Streptococcus faecalis.</title>
        <authorList>
            <person name="Shaw J.H."/>
            <person name="Clewell D.B."/>
        </authorList>
    </citation>
    <scope>NUCLEOTIDE SEQUENCE [GENOMIC DNA]</scope>
    <source>
        <strain>DS16</strain>
        <plasmid>pAD2</plasmid>
        <transposon>Tn917</transposon>
    </source>
</reference>
<reference key="2">
    <citation type="submission" date="2002-06" db="EMBL/GenBank/DDBJ databases">
        <authorList>
            <person name="Flannagan S.E."/>
            <person name="Clewell D.B."/>
        </authorList>
    </citation>
    <scope>SEQUENCE REVISION TO C-TERMINUS</scope>
</reference>
<organism>
    <name type="scientific">Enterococcus faecalis</name>
    <name type="common">Streptococcus faecalis</name>
    <dbReference type="NCBI Taxonomy" id="1351"/>
    <lineage>
        <taxon>Bacteria</taxon>
        <taxon>Bacillati</taxon>
        <taxon>Bacillota</taxon>
        <taxon>Bacilli</taxon>
        <taxon>Lactobacillales</taxon>
        <taxon>Enterococcaceae</taxon>
        <taxon>Enterococcus</taxon>
    </lineage>
</organism>
<geneLocation type="plasmid">
    <name>pAD2</name>
</geneLocation>
<proteinExistence type="predicted"/>
<feature type="peptide" id="PRO_0000044004" description="23S rRNA methylase leader peptide">
    <location>
        <begin position="1"/>
        <end position="27"/>
    </location>
</feature>
<dbReference type="EMBL" id="M11180">
    <property type="protein sequence ID" value="AAA27451.2"/>
    <property type="molecule type" value="Genomic_DNA"/>
</dbReference>
<dbReference type="PIR" id="A25028">
    <property type="entry name" value="A25028"/>
</dbReference>
<dbReference type="RefSeq" id="WP_001814874.1">
    <property type="nucleotide sequence ID" value="NZ_WYAC01000004.1"/>
</dbReference>
<dbReference type="RefSeq" id="YP_004032992.1">
    <property type="nucleotide sequence ID" value="NC_014726.1"/>
</dbReference>
<dbReference type="RefSeq" id="YP_004033001.1">
    <property type="nucleotide sequence ID" value="NC_014726.1"/>
</dbReference>
<dbReference type="RefSeq" id="YP_783897.1">
    <property type="nucleotide sequence ID" value="NC_008445.1"/>
</dbReference>
<dbReference type="GO" id="GO:0046677">
    <property type="term" value="P:response to antibiotic"/>
    <property type="evidence" value="ECO:0007669"/>
    <property type="project" value="UniProtKB-KW"/>
</dbReference>
<dbReference type="InterPro" id="IPR009391">
    <property type="entry name" value="ErmCL"/>
</dbReference>
<dbReference type="Pfam" id="PF06308">
    <property type="entry name" value="ErmC"/>
    <property type="match status" value="1"/>
</dbReference>
<name>LPRM_ENTFL</name>
<sequence>MLVFQMRNVDKTSTVLKQTKNSDYADK</sequence>
<comment type="function">
    <text>This peptide is involved in the control mechanism of the synthesis of the erythromycin resistance protein.</text>
</comment>
<keyword id="KW-0046">Antibiotic resistance</keyword>
<keyword id="KW-0428">Leader peptide</keyword>
<keyword id="KW-0614">Plasmid</keyword>
<keyword id="KW-0814">Transposable element</keyword>
<gene>
    <name type="primary">ermC</name>
</gene>